<organism>
    <name type="scientific">Gluconacetobacter diazotrophicus (strain ATCC 49037 / DSM 5601 / CCUG 37298 / CIP 103539 / LMG 7603 / PAl5)</name>
    <dbReference type="NCBI Taxonomy" id="272568"/>
    <lineage>
        <taxon>Bacteria</taxon>
        <taxon>Pseudomonadati</taxon>
        <taxon>Pseudomonadota</taxon>
        <taxon>Alphaproteobacteria</taxon>
        <taxon>Acetobacterales</taxon>
        <taxon>Acetobacteraceae</taxon>
        <taxon>Gluconacetobacter</taxon>
    </lineage>
</organism>
<evidence type="ECO:0000255" key="1">
    <source>
        <dbReference type="HAMAP-Rule" id="MF_00022"/>
    </source>
</evidence>
<protein>
    <recommendedName>
        <fullName evidence="1">Glutamate--tRNA ligase 1</fullName>
        <ecNumber evidence="1">6.1.1.17</ecNumber>
    </recommendedName>
    <alternativeName>
        <fullName evidence="1">Glutamyl-tRNA synthetase 1</fullName>
        <shortName evidence="1">GluRS 1</shortName>
    </alternativeName>
</protein>
<comment type="function">
    <text evidence="1">Catalyzes the attachment of glutamate to tRNA(Glu) in a two-step reaction: glutamate is first activated by ATP to form Glu-AMP and then transferred to the acceptor end of tRNA(Glu).</text>
</comment>
<comment type="catalytic activity">
    <reaction evidence="1">
        <text>tRNA(Glu) + L-glutamate + ATP = L-glutamyl-tRNA(Glu) + AMP + diphosphate</text>
        <dbReference type="Rhea" id="RHEA:23540"/>
        <dbReference type="Rhea" id="RHEA-COMP:9663"/>
        <dbReference type="Rhea" id="RHEA-COMP:9680"/>
        <dbReference type="ChEBI" id="CHEBI:29985"/>
        <dbReference type="ChEBI" id="CHEBI:30616"/>
        <dbReference type="ChEBI" id="CHEBI:33019"/>
        <dbReference type="ChEBI" id="CHEBI:78442"/>
        <dbReference type="ChEBI" id="CHEBI:78520"/>
        <dbReference type="ChEBI" id="CHEBI:456215"/>
        <dbReference type="EC" id="6.1.1.17"/>
    </reaction>
</comment>
<comment type="subunit">
    <text evidence="1">Monomer.</text>
</comment>
<comment type="subcellular location">
    <subcellularLocation>
        <location evidence="1">Cytoplasm</location>
    </subcellularLocation>
</comment>
<comment type="similarity">
    <text evidence="1">Belongs to the class-I aminoacyl-tRNA synthetase family. Glutamate--tRNA ligase type 1 subfamily.</text>
</comment>
<proteinExistence type="inferred from homology"/>
<keyword id="KW-0030">Aminoacyl-tRNA synthetase</keyword>
<keyword id="KW-0067">ATP-binding</keyword>
<keyword id="KW-0963">Cytoplasm</keyword>
<keyword id="KW-0436">Ligase</keyword>
<keyword id="KW-0547">Nucleotide-binding</keyword>
<keyword id="KW-0648">Protein biosynthesis</keyword>
<keyword id="KW-1185">Reference proteome</keyword>
<sequence>MTVRTRFAPSPTGLLHIGNARAALFNFLYARHHGGKFLLRIEDTDRERSTQQAVDVLFDGLAWMGITPDEEPVFQSTRQARHAEIAHHLLAQGLAYRCYCTPEELQQMRDQAAAEGRPPRYNGYWRDRDPSEAPAGAPYTVRIRAPREGETVIHDLVQGDVRVANAELDDMIILRGDGTPVYQLAVVVDDHDMDITHVIRGDDHLTNTFRQAMIYRAMGWDLPAFAHLPLIHGPDGAKLSKRHGAQSVVEFREMGYLPEALNNYLLRLGWGHGDAEILSRDEQIQLFDLDGVGRSASRMDYVKLQHLNGVWLRQADDARLTDDIVARLADRPDVSVDEAVRARILALMPGLKERAKTLVDLADSAAFLGRHVPLAFDAKAEKLLTPEARAMLGELARDLAVIEPFDAPAIDVALRRFAEHHGHKLGQVAQPLRAAMTGGATSPGIDATLAALGRDEVMARIGAVAR</sequence>
<gene>
    <name evidence="1" type="primary">gltX1</name>
    <name type="ordered locus">GDI0050</name>
    <name type="ordered locus">Gdia_1640</name>
</gene>
<name>SYE1_GLUDA</name>
<feature type="chain" id="PRO_1000074323" description="Glutamate--tRNA ligase 1">
    <location>
        <begin position="1"/>
        <end position="466"/>
    </location>
</feature>
<feature type="short sequence motif" description="'HIGH' region" evidence="1">
    <location>
        <begin position="9"/>
        <end position="19"/>
    </location>
</feature>
<feature type="short sequence motif" description="'KMSKS' region" evidence="1">
    <location>
        <begin position="238"/>
        <end position="242"/>
    </location>
</feature>
<feature type="binding site" evidence="1">
    <location>
        <position position="241"/>
    </location>
    <ligand>
        <name>ATP</name>
        <dbReference type="ChEBI" id="CHEBI:30616"/>
    </ligand>
</feature>
<reference key="1">
    <citation type="journal article" date="2009" name="BMC Genomics">
        <title>Complete genome sequence of the sugarcane nitrogen-fixing endophyte Gluconacetobacter diazotrophicus Pal5.</title>
        <authorList>
            <person name="Bertalan M."/>
            <person name="Albano R."/>
            <person name="de Padua V."/>
            <person name="Rouws L."/>
            <person name="Rojas C."/>
            <person name="Hemerly A."/>
            <person name="Teixeira K."/>
            <person name="Schwab S."/>
            <person name="Araujo J."/>
            <person name="Oliveira A."/>
            <person name="Franca L."/>
            <person name="Magalhaes V."/>
            <person name="Alqueres S."/>
            <person name="Cardoso A."/>
            <person name="Almeida W."/>
            <person name="Loureiro M.M."/>
            <person name="Nogueira E."/>
            <person name="Cidade D."/>
            <person name="Oliveira D."/>
            <person name="Simao T."/>
            <person name="Macedo J."/>
            <person name="Valadao A."/>
            <person name="Dreschsel M."/>
            <person name="Freitas F."/>
            <person name="Vidal M."/>
            <person name="Guedes H."/>
            <person name="Rodrigues E."/>
            <person name="Meneses C."/>
            <person name="Brioso P."/>
            <person name="Pozzer L."/>
            <person name="Figueiredo D."/>
            <person name="Montano H."/>
            <person name="Junior J."/>
            <person name="de Souza Filho G."/>
            <person name="Martin Quintana Flores V."/>
            <person name="Ferreira B."/>
            <person name="Branco A."/>
            <person name="Gonzalez P."/>
            <person name="Guillobel H."/>
            <person name="Lemos M."/>
            <person name="Seibel L."/>
            <person name="Macedo J."/>
            <person name="Alves-Ferreira M."/>
            <person name="Sachetto-Martins G."/>
            <person name="Coelho A."/>
            <person name="Santos E."/>
            <person name="Amaral G."/>
            <person name="Neves A."/>
            <person name="Pacheco A.B."/>
            <person name="Carvalho D."/>
            <person name="Lery L."/>
            <person name="Bisch P."/>
            <person name="Rossle S.C."/>
            <person name="Urmenyi T."/>
            <person name="Rael Pereira A."/>
            <person name="Silva R."/>
            <person name="Rondinelli E."/>
            <person name="von Kruger W."/>
            <person name="Martins O."/>
            <person name="Baldani J.I."/>
            <person name="Ferreira P.C."/>
        </authorList>
    </citation>
    <scope>NUCLEOTIDE SEQUENCE [LARGE SCALE GENOMIC DNA]</scope>
    <source>
        <strain>ATCC 49037 / DSM 5601 / CCUG 37298 / CIP 103539 / LMG 7603 / PAl5</strain>
    </source>
</reference>
<reference key="2">
    <citation type="journal article" date="2010" name="Stand. Genomic Sci.">
        <title>Two genome sequences of the same bacterial strain, Gluconacetobacter diazotrophicus PAl 5, suggest a new standard in genome sequence submission.</title>
        <authorList>
            <person name="Giongo A."/>
            <person name="Tyler H.L."/>
            <person name="Zipperer U.N."/>
            <person name="Triplett E.W."/>
        </authorList>
    </citation>
    <scope>NUCLEOTIDE SEQUENCE [LARGE SCALE GENOMIC DNA]</scope>
    <source>
        <strain>ATCC 49037 / DSM 5601 / CCUG 37298 / CIP 103539 / LMG 7603 / PAl5</strain>
    </source>
</reference>
<accession>A9GZS1</accession>
<accession>B5ZK54</accession>
<dbReference type="EC" id="6.1.1.17" evidence="1"/>
<dbReference type="EMBL" id="AM889285">
    <property type="protein sequence ID" value="CAP53993.1"/>
    <property type="molecule type" value="Genomic_DNA"/>
</dbReference>
<dbReference type="EMBL" id="CP001189">
    <property type="protein sequence ID" value="ACI51417.1"/>
    <property type="molecule type" value="Genomic_DNA"/>
</dbReference>
<dbReference type="RefSeq" id="WP_012222298.1">
    <property type="nucleotide sequence ID" value="NC_010125.1"/>
</dbReference>
<dbReference type="SMR" id="A9GZS1"/>
<dbReference type="STRING" id="272568.GDI0050"/>
<dbReference type="KEGG" id="gdi:GDI0050"/>
<dbReference type="KEGG" id="gdj:Gdia_1640"/>
<dbReference type="eggNOG" id="COG0008">
    <property type="taxonomic scope" value="Bacteria"/>
</dbReference>
<dbReference type="HOGENOM" id="CLU_015768_6_3_5"/>
<dbReference type="OrthoDB" id="9807503at2"/>
<dbReference type="Proteomes" id="UP000001176">
    <property type="component" value="Chromosome"/>
</dbReference>
<dbReference type="GO" id="GO:0005829">
    <property type="term" value="C:cytosol"/>
    <property type="evidence" value="ECO:0007669"/>
    <property type="project" value="TreeGrafter"/>
</dbReference>
<dbReference type="GO" id="GO:0005524">
    <property type="term" value="F:ATP binding"/>
    <property type="evidence" value="ECO:0007669"/>
    <property type="project" value="UniProtKB-UniRule"/>
</dbReference>
<dbReference type="GO" id="GO:0004818">
    <property type="term" value="F:glutamate-tRNA ligase activity"/>
    <property type="evidence" value="ECO:0007669"/>
    <property type="project" value="UniProtKB-UniRule"/>
</dbReference>
<dbReference type="GO" id="GO:0000049">
    <property type="term" value="F:tRNA binding"/>
    <property type="evidence" value="ECO:0007669"/>
    <property type="project" value="InterPro"/>
</dbReference>
<dbReference type="GO" id="GO:0008270">
    <property type="term" value="F:zinc ion binding"/>
    <property type="evidence" value="ECO:0007669"/>
    <property type="project" value="InterPro"/>
</dbReference>
<dbReference type="GO" id="GO:0006424">
    <property type="term" value="P:glutamyl-tRNA aminoacylation"/>
    <property type="evidence" value="ECO:0007669"/>
    <property type="project" value="UniProtKB-UniRule"/>
</dbReference>
<dbReference type="CDD" id="cd00808">
    <property type="entry name" value="GluRS_core"/>
    <property type="match status" value="1"/>
</dbReference>
<dbReference type="FunFam" id="3.40.50.620:FF:000007">
    <property type="entry name" value="Glutamate--tRNA ligase"/>
    <property type="match status" value="1"/>
</dbReference>
<dbReference type="Gene3D" id="1.10.10.350">
    <property type="match status" value="1"/>
</dbReference>
<dbReference type="Gene3D" id="3.40.50.620">
    <property type="entry name" value="HUPs"/>
    <property type="match status" value="1"/>
</dbReference>
<dbReference type="HAMAP" id="MF_00022">
    <property type="entry name" value="Glu_tRNA_synth_type1"/>
    <property type="match status" value="1"/>
</dbReference>
<dbReference type="InterPro" id="IPR045462">
    <property type="entry name" value="aa-tRNA-synth_I_cd-bd"/>
</dbReference>
<dbReference type="InterPro" id="IPR020751">
    <property type="entry name" value="aa-tRNA-synth_I_codon-bd_sub2"/>
</dbReference>
<dbReference type="InterPro" id="IPR001412">
    <property type="entry name" value="aa-tRNA-synth_I_CS"/>
</dbReference>
<dbReference type="InterPro" id="IPR008925">
    <property type="entry name" value="aa_tRNA-synth_I_cd-bd_sf"/>
</dbReference>
<dbReference type="InterPro" id="IPR004527">
    <property type="entry name" value="Glu-tRNA-ligase_bac/mito"/>
</dbReference>
<dbReference type="InterPro" id="IPR000924">
    <property type="entry name" value="Glu/Gln-tRNA-synth"/>
</dbReference>
<dbReference type="InterPro" id="IPR020058">
    <property type="entry name" value="Glu/Gln-tRNA-synth_Ib_cat-dom"/>
</dbReference>
<dbReference type="InterPro" id="IPR049940">
    <property type="entry name" value="GluQ/Sye"/>
</dbReference>
<dbReference type="InterPro" id="IPR033910">
    <property type="entry name" value="GluRS_core"/>
</dbReference>
<dbReference type="InterPro" id="IPR014729">
    <property type="entry name" value="Rossmann-like_a/b/a_fold"/>
</dbReference>
<dbReference type="NCBIfam" id="TIGR00464">
    <property type="entry name" value="gltX_bact"/>
    <property type="match status" value="1"/>
</dbReference>
<dbReference type="PANTHER" id="PTHR43311">
    <property type="entry name" value="GLUTAMATE--TRNA LIGASE"/>
    <property type="match status" value="1"/>
</dbReference>
<dbReference type="PANTHER" id="PTHR43311:SF2">
    <property type="entry name" value="GLUTAMATE--TRNA LIGASE, MITOCHONDRIAL-RELATED"/>
    <property type="match status" value="1"/>
</dbReference>
<dbReference type="Pfam" id="PF19269">
    <property type="entry name" value="Anticodon_2"/>
    <property type="match status" value="1"/>
</dbReference>
<dbReference type="Pfam" id="PF00749">
    <property type="entry name" value="tRNA-synt_1c"/>
    <property type="match status" value="1"/>
</dbReference>
<dbReference type="PRINTS" id="PR00987">
    <property type="entry name" value="TRNASYNTHGLU"/>
</dbReference>
<dbReference type="SUPFAM" id="SSF48163">
    <property type="entry name" value="An anticodon-binding domain of class I aminoacyl-tRNA synthetases"/>
    <property type="match status" value="1"/>
</dbReference>
<dbReference type="SUPFAM" id="SSF52374">
    <property type="entry name" value="Nucleotidylyl transferase"/>
    <property type="match status" value="1"/>
</dbReference>
<dbReference type="PROSITE" id="PS00178">
    <property type="entry name" value="AA_TRNA_LIGASE_I"/>
    <property type="match status" value="1"/>
</dbReference>